<feature type="chain" id="PRO_0000391776" description="Putative 8-oxo-dGTP diphosphatase 2">
    <location>
        <begin position="1"/>
        <end position="141"/>
    </location>
</feature>
<feature type="domain" description="Nudix hydrolase" evidence="2">
    <location>
        <begin position="2"/>
        <end position="131"/>
    </location>
</feature>
<feature type="short sequence motif" description="Nudix box">
    <location>
        <begin position="37"/>
        <end position="58"/>
    </location>
</feature>
<feature type="binding site" evidence="1">
    <location>
        <position position="37"/>
    </location>
    <ligand>
        <name>Mg(2+)</name>
        <dbReference type="ChEBI" id="CHEBI:18420"/>
    </ligand>
</feature>
<feature type="binding site" evidence="1">
    <location>
        <position position="52"/>
    </location>
    <ligand>
        <name>Mg(2+)</name>
        <dbReference type="ChEBI" id="CHEBI:18420"/>
    </ligand>
</feature>
<feature type="binding site" evidence="1">
    <location>
        <position position="55"/>
    </location>
    <ligand>
        <name>Mg(2+)</name>
        <dbReference type="ChEBI" id="CHEBI:18420"/>
    </ligand>
</feature>
<feature type="binding site" evidence="1">
    <location>
        <position position="56"/>
    </location>
    <ligand>
        <name>Mg(2+)</name>
        <dbReference type="ChEBI" id="CHEBI:18420"/>
    </ligand>
</feature>
<sequence length="141" mass="15160">MLNQIVVAGAIVRGCTVLVAQRVRPPELAGRWELPGGKVAAGETERAALARELAEELGLEVADLAVGDRVGDDIALNGTTTLRAYRVHLLGGEPRARDHRALCWVTAAELHDVDWVPADRGWIADLARTLNGSAADVHRRC</sequence>
<name>MUTT2_MYCTU</name>
<dbReference type="EC" id="3.6.1.55"/>
<dbReference type="EMBL" id="AL123456">
    <property type="protein sequence ID" value="CCP43916.1"/>
    <property type="molecule type" value="Genomic_DNA"/>
</dbReference>
<dbReference type="PIR" id="A70556">
    <property type="entry name" value="A70556"/>
</dbReference>
<dbReference type="RefSeq" id="NP_215676.1">
    <property type="nucleotide sequence ID" value="NC_000962.3"/>
</dbReference>
<dbReference type="SMR" id="P9WIY1"/>
<dbReference type="FunCoup" id="P9WIY1">
    <property type="interactions" value="8"/>
</dbReference>
<dbReference type="STRING" id="83332.Rv1160"/>
<dbReference type="PaxDb" id="83332-Rv1160"/>
<dbReference type="DNASU" id="888485"/>
<dbReference type="GeneID" id="888485"/>
<dbReference type="KEGG" id="mtu:Rv1160"/>
<dbReference type="KEGG" id="mtv:RVBD_1160"/>
<dbReference type="TubercuList" id="Rv1160"/>
<dbReference type="eggNOG" id="COG1051">
    <property type="taxonomic scope" value="Bacteria"/>
</dbReference>
<dbReference type="InParanoid" id="P9WIY1"/>
<dbReference type="OrthoDB" id="9804442at2"/>
<dbReference type="PhylomeDB" id="P9WIY1"/>
<dbReference type="Proteomes" id="UP000001584">
    <property type="component" value="Chromosome"/>
</dbReference>
<dbReference type="GO" id="GO:0035539">
    <property type="term" value="F:8-oxo-7,8-dihydrodeoxyguanosine triphosphate pyrophosphatase activity"/>
    <property type="evidence" value="ECO:0000318"/>
    <property type="project" value="GO_Central"/>
</dbReference>
<dbReference type="GO" id="GO:0008413">
    <property type="term" value="F:8-oxo-7,8-dihydroguanosine triphosphate pyrophosphatase activity"/>
    <property type="evidence" value="ECO:0000318"/>
    <property type="project" value="GO_Central"/>
</dbReference>
<dbReference type="GO" id="GO:0044715">
    <property type="term" value="F:8-oxo-dGDP phosphatase activity"/>
    <property type="evidence" value="ECO:0000318"/>
    <property type="project" value="GO_Central"/>
</dbReference>
<dbReference type="GO" id="GO:0044716">
    <property type="term" value="F:8-oxo-GDP phosphatase activity"/>
    <property type="evidence" value="ECO:0000318"/>
    <property type="project" value="GO_Central"/>
</dbReference>
<dbReference type="GO" id="GO:0046872">
    <property type="term" value="F:metal ion binding"/>
    <property type="evidence" value="ECO:0007669"/>
    <property type="project" value="UniProtKB-KW"/>
</dbReference>
<dbReference type="GO" id="GO:0006281">
    <property type="term" value="P:DNA repair"/>
    <property type="evidence" value="ECO:0000318"/>
    <property type="project" value="GO_Central"/>
</dbReference>
<dbReference type="GO" id="GO:0006260">
    <property type="term" value="P:DNA replication"/>
    <property type="evidence" value="ECO:0007669"/>
    <property type="project" value="UniProtKB-KW"/>
</dbReference>
<dbReference type="CDD" id="cd03425">
    <property type="entry name" value="NUDIX_MutT_NudA_like"/>
    <property type="match status" value="1"/>
</dbReference>
<dbReference type="Gene3D" id="3.90.79.10">
    <property type="entry name" value="Nucleoside Triphosphate Pyrophosphohydrolase"/>
    <property type="match status" value="1"/>
</dbReference>
<dbReference type="InterPro" id="IPR047127">
    <property type="entry name" value="MutT-like"/>
</dbReference>
<dbReference type="InterPro" id="IPR020476">
    <property type="entry name" value="Nudix_hydrolase"/>
</dbReference>
<dbReference type="InterPro" id="IPR015797">
    <property type="entry name" value="NUDIX_hydrolase-like_dom_sf"/>
</dbReference>
<dbReference type="InterPro" id="IPR020084">
    <property type="entry name" value="NUDIX_hydrolase_CS"/>
</dbReference>
<dbReference type="InterPro" id="IPR000086">
    <property type="entry name" value="NUDIX_hydrolase_dom"/>
</dbReference>
<dbReference type="PANTHER" id="PTHR47707">
    <property type="entry name" value="8-OXO-DGTP DIPHOSPHATASE"/>
    <property type="match status" value="1"/>
</dbReference>
<dbReference type="PANTHER" id="PTHR47707:SF1">
    <property type="entry name" value="NUDIX HYDROLASE FAMILY PROTEIN"/>
    <property type="match status" value="1"/>
</dbReference>
<dbReference type="Pfam" id="PF00293">
    <property type="entry name" value="NUDIX"/>
    <property type="match status" value="1"/>
</dbReference>
<dbReference type="PRINTS" id="PR00502">
    <property type="entry name" value="NUDIXFAMILY"/>
</dbReference>
<dbReference type="SUPFAM" id="SSF55811">
    <property type="entry name" value="Nudix"/>
    <property type="match status" value="1"/>
</dbReference>
<dbReference type="PROSITE" id="PS51462">
    <property type="entry name" value="NUDIX"/>
    <property type="match status" value="1"/>
</dbReference>
<dbReference type="PROSITE" id="PS00893">
    <property type="entry name" value="NUDIX_BOX"/>
    <property type="match status" value="1"/>
</dbReference>
<gene>
    <name type="primary">mutT2</name>
    <name type="ordered locus">Rv1160</name>
</gene>
<comment type="function">
    <text evidence="1 3">May be involved in the GO system responsible for removing an oxidatively damaged form of guanine (7,8-dihydro-8-oxoguanine, 8-oxo-dGTP) from DNA and the nucleotide pool. 8-oxo-dGTP is inserted opposite dA and dC residues of template DNA with almost equal efficiency thus leading to A.T to G.C transversions. MutT specifically degrades 8-oxo-dGTP to the monophosphate (By similarity). In vitro has 8-oxo-dGTPase activity.</text>
</comment>
<comment type="catalytic activity">
    <reaction>
        <text>8-oxo-dGTP + H2O = 8-oxo-dGMP + diphosphate + H(+)</text>
        <dbReference type="Rhea" id="RHEA:31575"/>
        <dbReference type="ChEBI" id="CHEBI:15377"/>
        <dbReference type="ChEBI" id="CHEBI:15378"/>
        <dbReference type="ChEBI" id="CHEBI:33019"/>
        <dbReference type="ChEBI" id="CHEBI:63224"/>
        <dbReference type="ChEBI" id="CHEBI:77896"/>
        <dbReference type="EC" id="3.6.1.55"/>
    </reaction>
</comment>
<comment type="cofactor">
    <cofactor evidence="1">
        <name>Mg(2+)</name>
        <dbReference type="ChEBI" id="CHEBI:18420"/>
    </cofactor>
    <cofactor evidence="1">
        <name>Mn(2+)</name>
        <dbReference type="ChEBI" id="CHEBI:29035"/>
    </cofactor>
</comment>
<comment type="disruption phenotype">
    <text evidence="3">No visible phenotype.</text>
</comment>
<comment type="miscellaneous">
    <text>There are 4 mutT paralogs in M.tuberculosis; the exact function of each is unknown.</text>
</comment>
<comment type="similarity">
    <text evidence="4">Belongs to the Nudix hydrolase family.</text>
</comment>
<accession>P9WIY1</accession>
<accession>L0T5W0</accession>
<accession>O06558</accession>
<accession>Q7D8R0</accession>
<reference key="1">
    <citation type="journal article" date="1998" name="Nature">
        <title>Deciphering the biology of Mycobacterium tuberculosis from the complete genome sequence.</title>
        <authorList>
            <person name="Cole S.T."/>
            <person name="Brosch R."/>
            <person name="Parkhill J."/>
            <person name="Garnier T."/>
            <person name="Churcher C.M."/>
            <person name="Harris D.E."/>
            <person name="Gordon S.V."/>
            <person name="Eiglmeier K."/>
            <person name="Gas S."/>
            <person name="Barry C.E. III"/>
            <person name="Tekaia F."/>
            <person name="Badcock K."/>
            <person name="Basham D."/>
            <person name="Brown D."/>
            <person name="Chillingworth T."/>
            <person name="Connor R."/>
            <person name="Davies R.M."/>
            <person name="Devlin K."/>
            <person name="Feltwell T."/>
            <person name="Gentles S."/>
            <person name="Hamlin N."/>
            <person name="Holroyd S."/>
            <person name="Hornsby T."/>
            <person name="Jagels K."/>
            <person name="Krogh A."/>
            <person name="McLean J."/>
            <person name="Moule S."/>
            <person name="Murphy L.D."/>
            <person name="Oliver S."/>
            <person name="Osborne J."/>
            <person name="Quail M.A."/>
            <person name="Rajandream M.A."/>
            <person name="Rogers J."/>
            <person name="Rutter S."/>
            <person name="Seeger K."/>
            <person name="Skelton S."/>
            <person name="Squares S."/>
            <person name="Squares R."/>
            <person name="Sulston J.E."/>
            <person name="Taylor K."/>
            <person name="Whitehead S."/>
            <person name="Barrell B.G."/>
        </authorList>
    </citation>
    <scope>NUCLEOTIDE SEQUENCE [LARGE SCALE GENOMIC DNA]</scope>
    <source>
        <strain>ATCC 25618 / H37Rv</strain>
    </source>
</reference>
<reference key="2">
    <citation type="journal article" date="2006" name="J. Bacteriol.">
        <title>Identification of Nudix hydrolase family members with an antimutator role in Mycobacterium tuberculosis and Mycobacterium smegmatis.</title>
        <authorList>
            <person name="Dos Vultos T."/>
            <person name="Blazquez J."/>
            <person name="Rauzier J."/>
            <person name="Matic I."/>
            <person name="Gicquel B."/>
        </authorList>
    </citation>
    <scope>FUNCTION</scope>
    <scope>DISRUPTION PHENOTYPE</scope>
    <source>
        <strain>ATCC 25618 / H37Rv</strain>
    </source>
</reference>
<reference key="3">
    <citation type="journal article" date="2011" name="Mol. Cell. Proteomics">
        <title>Proteogenomic analysis of Mycobacterium tuberculosis by high resolution mass spectrometry.</title>
        <authorList>
            <person name="Kelkar D.S."/>
            <person name="Kumar D."/>
            <person name="Kumar P."/>
            <person name="Balakrishnan L."/>
            <person name="Muthusamy B."/>
            <person name="Yadav A.K."/>
            <person name="Shrivastava P."/>
            <person name="Marimuthu A."/>
            <person name="Anand S."/>
            <person name="Sundaram H."/>
            <person name="Kingsbury R."/>
            <person name="Harsha H.C."/>
            <person name="Nair B."/>
            <person name="Prasad T.S."/>
            <person name="Chauhan D.S."/>
            <person name="Katoch K."/>
            <person name="Katoch V.M."/>
            <person name="Kumar P."/>
            <person name="Chaerkady R."/>
            <person name="Ramachandran S."/>
            <person name="Dash D."/>
            <person name="Pandey A."/>
        </authorList>
    </citation>
    <scope>IDENTIFICATION BY MASS SPECTROMETRY [LARGE SCALE ANALYSIS]</scope>
    <source>
        <strain>ATCC 25618 / H37Rv</strain>
    </source>
</reference>
<keyword id="KW-0227">DNA damage</keyword>
<keyword id="KW-0234">DNA repair</keyword>
<keyword id="KW-0235">DNA replication</keyword>
<keyword id="KW-0378">Hydrolase</keyword>
<keyword id="KW-0460">Magnesium</keyword>
<keyword id="KW-0464">Manganese</keyword>
<keyword id="KW-0479">Metal-binding</keyword>
<keyword id="KW-0515">Mutator protein</keyword>
<keyword id="KW-1185">Reference proteome</keyword>
<protein>
    <recommendedName>
        <fullName>Putative 8-oxo-dGTP diphosphatase 2</fullName>
        <shortName>8-oxo-dGTPase 2</shortName>
        <ecNumber>3.6.1.55</ecNumber>
    </recommendedName>
    <alternativeName>
        <fullName>7,8-dihydro-8-oxoguanine-triphosphatase 2</fullName>
    </alternativeName>
    <alternativeName>
        <fullName>Mutator protein MutT2</fullName>
    </alternativeName>
    <alternativeName>
        <fullName>dGTP pyrophosphohydrolase 2</fullName>
    </alternativeName>
</protein>
<evidence type="ECO:0000250" key="1"/>
<evidence type="ECO:0000255" key="2">
    <source>
        <dbReference type="PROSITE-ProRule" id="PRU00794"/>
    </source>
</evidence>
<evidence type="ECO:0000269" key="3">
    <source>
    </source>
</evidence>
<evidence type="ECO:0000305" key="4"/>
<proteinExistence type="evidence at protein level"/>
<organism>
    <name type="scientific">Mycobacterium tuberculosis (strain ATCC 25618 / H37Rv)</name>
    <dbReference type="NCBI Taxonomy" id="83332"/>
    <lineage>
        <taxon>Bacteria</taxon>
        <taxon>Bacillati</taxon>
        <taxon>Actinomycetota</taxon>
        <taxon>Actinomycetes</taxon>
        <taxon>Mycobacteriales</taxon>
        <taxon>Mycobacteriaceae</taxon>
        <taxon>Mycobacterium</taxon>
        <taxon>Mycobacterium tuberculosis complex</taxon>
    </lineage>
</organism>